<dbReference type="EC" id="7.1.1.-" evidence="1"/>
<dbReference type="EMBL" id="CP000230">
    <property type="protein sequence ID" value="ABC22362.1"/>
    <property type="molecule type" value="Genomic_DNA"/>
</dbReference>
<dbReference type="RefSeq" id="WP_011389437.1">
    <property type="nucleotide sequence ID" value="NC_007643.1"/>
</dbReference>
<dbReference type="RefSeq" id="YP_426649.1">
    <property type="nucleotide sequence ID" value="NC_007643.1"/>
</dbReference>
<dbReference type="SMR" id="Q2RU33"/>
<dbReference type="STRING" id="269796.Rru_A1562"/>
<dbReference type="EnsemblBacteria" id="ABC22362">
    <property type="protein sequence ID" value="ABC22362"/>
    <property type="gene ID" value="Rru_A1562"/>
</dbReference>
<dbReference type="KEGG" id="rru:Rru_A1562"/>
<dbReference type="PATRIC" id="fig|269796.9.peg.1635"/>
<dbReference type="eggNOG" id="COG1005">
    <property type="taxonomic scope" value="Bacteria"/>
</dbReference>
<dbReference type="HOGENOM" id="CLU_015134_0_1_5"/>
<dbReference type="PhylomeDB" id="Q2RU33"/>
<dbReference type="BioCyc" id="MetaCyc:MONOMER-16398"/>
<dbReference type="Proteomes" id="UP000001929">
    <property type="component" value="Chromosome"/>
</dbReference>
<dbReference type="GO" id="GO:0005886">
    <property type="term" value="C:plasma membrane"/>
    <property type="evidence" value="ECO:0007669"/>
    <property type="project" value="UniProtKB-SubCell"/>
</dbReference>
<dbReference type="GO" id="GO:0003954">
    <property type="term" value="F:NADH dehydrogenase activity"/>
    <property type="evidence" value="ECO:0007669"/>
    <property type="project" value="TreeGrafter"/>
</dbReference>
<dbReference type="GO" id="GO:0016655">
    <property type="term" value="F:oxidoreductase activity, acting on NAD(P)H, quinone or similar compound as acceptor"/>
    <property type="evidence" value="ECO:0007669"/>
    <property type="project" value="UniProtKB-UniRule"/>
</dbReference>
<dbReference type="GO" id="GO:0048038">
    <property type="term" value="F:quinone binding"/>
    <property type="evidence" value="ECO:0007669"/>
    <property type="project" value="UniProtKB-KW"/>
</dbReference>
<dbReference type="GO" id="GO:0009060">
    <property type="term" value="P:aerobic respiration"/>
    <property type="evidence" value="ECO:0007669"/>
    <property type="project" value="TreeGrafter"/>
</dbReference>
<dbReference type="HAMAP" id="MF_01350">
    <property type="entry name" value="NDH1_NuoH"/>
    <property type="match status" value="1"/>
</dbReference>
<dbReference type="InterPro" id="IPR001694">
    <property type="entry name" value="NADH_UbQ_OxRdtase_su1/FPO"/>
</dbReference>
<dbReference type="InterPro" id="IPR018086">
    <property type="entry name" value="NADH_UbQ_OxRdtase_su1_CS"/>
</dbReference>
<dbReference type="NCBIfam" id="NF004741">
    <property type="entry name" value="PRK06076.1-2"/>
    <property type="match status" value="1"/>
</dbReference>
<dbReference type="NCBIfam" id="NF004745">
    <property type="entry name" value="PRK06076.1-6"/>
    <property type="match status" value="1"/>
</dbReference>
<dbReference type="PANTHER" id="PTHR11432">
    <property type="entry name" value="NADH DEHYDROGENASE SUBUNIT 1"/>
    <property type="match status" value="1"/>
</dbReference>
<dbReference type="PANTHER" id="PTHR11432:SF3">
    <property type="entry name" value="NADH-UBIQUINONE OXIDOREDUCTASE CHAIN 1"/>
    <property type="match status" value="1"/>
</dbReference>
<dbReference type="Pfam" id="PF00146">
    <property type="entry name" value="NADHdh"/>
    <property type="match status" value="1"/>
</dbReference>
<dbReference type="PROSITE" id="PS00667">
    <property type="entry name" value="COMPLEX1_ND1_1"/>
    <property type="match status" value="1"/>
</dbReference>
<dbReference type="PROSITE" id="PS00668">
    <property type="entry name" value="COMPLEX1_ND1_2"/>
    <property type="match status" value="1"/>
</dbReference>
<accession>Q2RU33</accession>
<proteinExistence type="inferred from homology"/>
<protein>
    <recommendedName>
        <fullName evidence="1">NADH-quinone oxidoreductase subunit H</fullName>
        <ecNumber evidence="1">7.1.1.-</ecNumber>
    </recommendedName>
    <alternativeName>
        <fullName evidence="1">NADH dehydrogenase I subunit H</fullName>
    </alternativeName>
    <alternativeName>
        <fullName evidence="1">NDH-1 subunit H</fullName>
    </alternativeName>
</protein>
<sequence length="337" mass="37320">MADFWGGYLWPAIIIVLQCLAIILPMLGAIAYLTYAERKVIGAMQMRKGPNVVGPFGLLQPLADGVKLFLKETIIPTGANRAVFIIAPLMTFILALIAWAVIPFDAGWVVADINVGVLYLFAVSGLGVYGIIMAGWASNSKYAFLGGLRSAAQMVSYEVAMGLIIIAVILSAGSMNLSDIVEAQRQGVWYFIPHFPMFVMFLVSILAETNRAPFDLPEAEAELVSGYNVEYSAMPFALFFLGEYGNMILMSGITAILFLGGWLPPVDIAPFNWIPGIIWFFLKIALILFVFLWVRATFPRYRYDQLMRLGWKVFLPGSLIWVVLTAGFLVTFDMLPR</sequence>
<name>NUOH_RHORT</name>
<comment type="function">
    <text evidence="1">NDH-1 shuttles electrons from NADH, via FMN and iron-sulfur (Fe-S) centers, to quinones in the respiratory chain. The immediate electron acceptor for the enzyme in this species is believed to be ubiquinone. Couples the redox reaction to proton translocation (for every two electrons transferred, four hydrogen ions are translocated across the cytoplasmic membrane), and thus conserves the redox energy in a proton gradient. This subunit may bind ubiquinone.</text>
</comment>
<comment type="catalytic activity">
    <reaction evidence="1">
        <text>a quinone + NADH + 5 H(+)(in) = a quinol + NAD(+) + 4 H(+)(out)</text>
        <dbReference type="Rhea" id="RHEA:57888"/>
        <dbReference type="ChEBI" id="CHEBI:15378"/>
        <dbReference type="ChEBI" id="CHEBI:24646"/>
        <dbReference type="ChEBI" id="CHEBI:57540"/>
        <dbReference type="ChEBI" id="CHEBI:57945"/>
        <dbReference type="ChEBI" id="CHEBI:132124"/>
    </reaction>
</comment>
<comment type="subunit">
    <text evidence="1">NDH-1 is composed of 14 different subunits. Subunits NuoA, H, J, K, L, M, N constitute the membrane sector of the complex.</text>
</comment>
<comment type="subcellular location">
    <subcellularLocation>
        <location evidence="1">Cell inner membrane</location>
        <topology evidence="1">Multi-pass membrane protein</topology>
    </subcellularLocation>
</comment>
<comment type="similarity">
    <text evidence="1">Belongs to the complex I subunit 1 family.</text>
</comment>
<organism>
    <name type="scientific">Rhodospirillum rubrum (strain ATCC 11170 / ATH 1.1.1 / DSM 467 / LMG 4362 / NCIMB 8255 / S1)</name>
    <dbReference type="NCBI Taxonomy" id="269796"/>
    <lineage>
        <taxon>Bacteria</taxon>
        <taxon>Pseudomonadati</taxon>
        <taxon>Pseudomonadota</taxon>
        <taxon>Alphaproteobacteria</taxon>
        <taxon>Rhodospirillales</taxon>
        <taxon>Rhodospirillaceae</taxon>
        <taxon>Rhodospirillum</taxon>
    </lineage>
</organism>
<evidence type="ECO:0000255" key="1">
    <source>
        <dbReference type="HAMAP-Rule" id="MF_01350"/>
    </source>
</evidence>
<reference key="1">
    <citation type="journal article" date="2011" name="Stand. Genomic Sci.">
        <title>Complete genome sequence of Rhodospirillum rubrum type strain (S1).</title>
        <authorList>
            <person name="Munk A.C."/>
            <person name="Copeland A."/>
            <person name="Lucas S."/>
            <person name="Lapidus A."/>
            <person name="Del Rio T.G."/>
            <person name="Barry K."/>
            <person name="Detter J.C."/>
            <person name="Hammon N."/>
            <person name="Israni S."/>
            <person name="Pitluck S."/>
            <person name="Brettin T."/>
            <person name="Bruce D."/>
            <person name="Han C."/>
            <person name="Tapia R."/>
            <person name="Gilna P."/>
            <person name="Schmutz J."/>
            <person name="Larimer F."/>
            <person name="Land M."/>
            <person name="Kyrpides N.C."/>
            <person name="Mavromatis K."/>
            <person name="Richardson P."/>
            <person name="Rohde M."/>
            <person name="Goeker M."/>
            <person name="Klenk H.P."/>
            <person name="Zhang Y."/>
            <person name="Roberts G.P."/>
            <person name="Reslewic S."/>
            <person name="Schwartz D.C."/>
        </authorList>
    </citation>
    <scope>NUCLEOTIDE SEQUENCE [LARGE SCALE GENOMIC DNA]</scope>
    <source>
        <strain>ATCC 11170 / ATH 1.1.1 / DSM 467 / LMG 4362 / NCIMB 8255 / S1</strain>
    </source>
</reference>
<gene>
    <name evidence="1" type="primary">nuoH</name>
    <name type="ordered locus">Rru_A1562</name>
</gene>
<keyword id="KW-0997">Cell inner membrane</keyword>
<keyword id="KW-1003">Cell membrane</keyword>
<keyword id="KW-0472">Membrane</keyword>
<keyword id="KW-0520">NAD</keyword>
<keyword id="KW-0874">Quinone</keyword>
<keyword id="KW-1185">Reference proteome</keyword>
<keyword id="KW-1278">Translocase</keyword>
<keyword id="KW-0812">Transmembrane</keyword>
<keyword id="KW-1133">Transmembrane helix</keyword>
<keyword id="KW-0830">Ubiquinone</keyword>
<feature type="chain" id="PRO_0000240106" description="NADH-quinone oxidoreductase subunit H">
    <location>
        <begin position="1"/>
        <end position="337"/>
    </location>
</feature>
<feature type="transmembrane region" description="Helical" evidence="1">
    <location>
        <begin position="13"/>
        <end position="33"/>
    </location>
</feature>
<feature type="transmembrane region" description="Helical" evidence="1">
    <location>
        <begin position="82"/>
        <end position="102"/>
    </location>
</feature>
<feature type="transmembrane region" description="Helical" evidence="1">
    <location>
        <begin position="115"/>
        <end position="135"/>
    </location>
</feature>
<feature type="transmembrane region" description="Helical" evidence="1">
    <location>
        <begin position="154"/>
        <end position="174"/>
    </location>
</feature>
<feature type="transmembrane region" description="Helical" evidence="1">
    <location>
        <begin position="187"/>
        <end position="207"/>
    </location>
</feature>
<feature type="transmembrane region" description="Helical" evidence="1">
    <location>
        <begin position="248"/>
        <end position="268"/>
    </location>
</feature>
<feature type="transmembrane region" description="Helical" evidence="1">
    <location>
        <begin position="274"/>
        <end position="294"/>
    </location>
</feature>
<feature type="transmembrane region" description="Helical" evidence="1">
    <location>
        <begin position="313"/>
        <end position="333"/>
    </location>
</feature>